<sequence length="625" mass="67935">MAIRQLPEMLINQIAAGEVVERPASVVKELVENALDAGATRVDIELEEGGVRLIRIRDNGGGIAPDELPLAVSRHATSKIASLDDLETVATLGFRGEALPSIASVSRFTLTSRRHDAEHGSALEIDGGRLGEVVPRAHAPGTTVEVRELFFNVPARRKFLRAERTELGHIEEWLRSLALARPDVELRVSHNGKPSRRYKPGDLYSDARLGETLGEDFARQALRVDHSGAGLRLHGWVAQPHYSRASTDQQYLYVNGRSVRDRSVAHAVKMAYGDVLFHGRQPAYVLFLELDPARVDVNVHPAKHEVRFREARLIHDFVYRTLQDALAHTRAGATPNSIGSDGAGYTGATAGEMGNIASGGPANHGNAPGRSGSAYSYANWTPSQTPLGLRVDEARAAYSALYAPPPRNAPQSTGMPSMAGTGLPATSEDSGVPPLGYAIAQLHGIYILAENAEGLIVVDMHAAHERIVYERLKNAHDSIGLHAQPLLVPMTLAVGEREADTAEREADTLATLGFEITRAGPQSLHVRSIPALLANAEPEALLRDVLGDLREHGQSCRIASARDELLSTMACHGAVRANRRLTVPEMNALLRDMEATERSGQCNHGRPTWARFTLSDIDRWFLRGR</sequence>
<proteinExistence type="inferred from homology"/>
<comment type="function">
    <text evidence="1">This protein is involved in the repair of mismatches in DNA. It is required for dam-dependent methyl-directed DNA mismatch repair. May act as a 'molecular matchmaker', a protein that promotes the formation of a stable complex between two or more DNA-binding proteins in an ATP-dependent manner without itself being part of a final effector complex.</text>
</comment>
<comment type="similarity">
    <text evidence="1">Belongs to the DNA mismatch repair MutL/HexB family.</text>
</comment>
<protein>
    <recommendedName>
        <fullName evidence="1">DNA mismatch repair protein MutL</fullName>
    </recommendedName>
</protein>
<name>MUTL_XANOP</name>
<dbReference type="EMBL" id="CP000967">
    <property type="protein sequence ID" value="ACD58558.1"/>
    <property type="molecule type" value="Genomic_DNA"/>
</dbReference>
<dbReference type="RefSeq" id="WP_011259334.1">
    <property type="nucleotide sequence ID" value="NC_010717.2"/>
</dbReference>
<dbReference type="SMR" id="B2SHP8"/>
<dbReference type="KEGG" id="xop:PXO_00410"/>
<dbReference type="eggNOG" id="COG0323">
    <property type="taxonomic scope" value="Bacteria"/>
</dbReference>
<dbReference type="HOGENOM" id="CLU_004131_4_2_6"/>
<dbReference type="Proteomes" id="UP000001740">
    <property type="component" value="Chromosome"/>
</dbReference>
<dbReference type="GO" id="GO:0032300">
    <property type="term" value="C:mismatch repair complex"/>
    <property type="evidence" value="ECO:0007669"/>
    <property type="project" value="InterPro"/>
</dbReference>
<dbReference type="GO" id="GO:0005524">
    <property type="term" value="F:ATP binding"/>
    <property type="evidence" value="ECO:0007669"/>
    <property type="project" value="InterPro"/>
</dbReference>
<dbReference type="GO" id="GO:0016887">
    <property type="term" value="F:ATP hydrolysis activity"/>
    <property type="evidence" value="ECO:0007669"/>
    <property type="project" value="InterPro"/>
</dbReference>
<dbReference type="GO" id="GO:0140664">
    <property type="term" value="F:ATP-dependent DNA damage sensor activity"/>
    <property type="evidence" value="ECO:0007669"/>
    <property type="project" value="InterPro"/>
</dbReference>
<dbReference type="GO" id="GO:0030983">
    <property type="term" value="F:mismatched DNA binding"/>
    <property type="evidence" value="ECO:0007669"/>
    <property type="project" value="InterPro"/>
</dbReference>
<dbReference type="GO" id="GO:0006298">
    <property type="term" value="P:mismatch repair"/>
    <property type="evidence" value="ECO:0007669"/>
    <property type="project" value="UniProtKB-UniRule"/>
</dbReference>
<dbReference type="CDD" id="cd16926">
    <property type="entry name" value="HATPase_MutL-MLH-PMS-like"/>
    <property type="match status" value="1"/>
</dbReference>
<dbReference type="CDD" id="cd03482">
    <property type="entry name" value="MutL_Trans_MutL"/>
    <property type="match status" value="1"/>
</dbReference>
<dbReference type="FunFam" id="3.30.230.10:FF:000013">
    <property type="entry name" value="DNA mismatch repair endonuclease MutL"/>
    <property type="match status" value="1"/>
</dbReference>
<dbReference type="FunFam" id="3.30.565.10:FF:000003">
    <property type="entry name" value="DNA mismatch repair endonuclease MutL"/>
    <property type="match status" value="1"/>
</dbReference>
<dbReference type="FunFam" id="3.30.1370.100:FF:000005">
    <property type="entry name" value="DNA mismatch repair protein MutL"/>
    <property type="match status" value="1"/>
</dbReference>
<dbReference type="Gene3D" id="3.30.230.10">
    <property type="match status" value="1"/>
</dbReference>
<dbReference type="Gene3D" id="3.30.565.10">
    <property type="entry name" value="Histidine kinase-like ATPase, C-terminal domain"/>
    <property type="match status" value="1"/>
</dbReference>
<dbReference type="Gene3D" id="3.30.1540.20">
    <property type="entry name" value="MutL, C-terminal domain, dimerisation subdomain"/>
    <property type="match status" value="1"/>
</dbReference>
<dbReference type="Gene3D" id="3.30.1370.100">
    <property type="entry name" value="MutL, C-terminal domain, regulatory subdomain"/>
    <property type="match status" value="1"/>
</dbReference>
<dbReference type="HAMAP" id="MF_00149">
    <property type="entry name" value="DNA_mis_repair"/>
    <property type="match status" value="1"/>
</dbReference>
<dbReference type="InterPro" id="IPR014762">
    <property type="entry name" value="DNA_mismatch_repair_CS"/>
</dbReference>
<dbReference type="InterPro" id="IPR020667">
    <property type="entry name" value="DNA_mismatch_repair_MutL"/>
</dbReference>
<dbReference type="InterPro" id="IPR013507">
    <property type="entry name" value="DNA_mismatch_S5_2-like"/>
</dbReference>
<dbReference type="InterPro" id="IPR036890">
    <property type="entry name" value="HATPase_C_sf"/>
</dbReference>
<dbReference type="InterPro" id="IPR002099">
    <property type="entry name" value="MutL/Mlh/PMS"/>
</dbReference>
<dbReference type="InterPro" id="IPR038973">
    <property type="entry name" value="MutL/Mlh/Pms-like"/>
</dbReference>
<dbReference type="InterPro" id="IPR014790">
    <property type="entry name" value="MutL_C"/>
</dbReference>
<dbReference type="InterPro" id="IPR042120">
    <property type="entry name" value="MutL_C_dimsub"/>
</dbReference>
<dbReference type="InterPro" id="IPR042121">
    <property type="entry name" value="MutL_C_regsub"/>
</dbReference>
<dbReference type="InterPro" id="IPR037198">
    <property type="entry name" value="MutL_C_sf"/>
</dbReference>
<dbReference type="InterPro" id="IPR020568">
    <property type="entry name" value="Ribosomal_Su5_D2-typ_SF"/>
</dbReference>
<dbReference type="InterPro" id="IPR014721">
    <property type="entry name" value="Ribsml_uS5_D2-typ_fold_subgr"/>
</dbReference>
<dbReference type="NCBIfam" id="TIGR00585">
    <property type="entry name" value="mutl"/>
    <property type="match status" value="1"/>
</dbReference>
<dbReference type="NCBIfam" id="NF000949">
    <property type="entry name" value="PRK00095.1-2"/>
    <property type="match status" value="1"/>
</dbReference>
<dbReference type="PANTHER" id="PTHR10073">
    <property type="entry name" value="DNA MISMATCH REPAIR PROTEIN MLH, PMS, MUTL"/>
    <property type="match status" value="1"/>
</dbReference>
<dbReference type="PANTHER" id="PTHR10073:SF12">
    <property type="entry name" value="DNA MISMATCH REPAIR PROTEIN MLH1"/>
    <property type="match status" value="1"/>
</dbReference>
<dbReference type="Pfam" id="PF01119">
    <property type="entry name" value="DNA_mis_repair"/>
    <property type="match status" value="1"/>
</dbReference>
<dbReference type="Pfam" id="PF13589">
    <property type="entry name" value="HATPase_c_3"/>
    <property type="match status" value="1"/>
</dbReference>
<dbReference type="Pfam" id="PF08676">
    <property type="entry name" value="MutL_C"/>
    <property type="match status" value="1"/>
</dbReference>
<dbReference type="SMART" id="SM01340">
    <property type="entry name" value="DNA_mis_repair"/>
    <property type="match status" value="1"/>
</dbReference>
<dbReference type="SMART" id="SM00853">
    <property type="entry name" value="MutL_C"/>
    <property type="match status" value="1"/>
</dbReference>
<dbReference type="SUPFAM" id="SSF55874">
    <property type="entry name" value="ATPase domain of HSP90 chaperone/DNA topoisomerase II/histidine kinase"/>
    <property type="match status" value="1"/>
</dbReference>
<dbReference type="SUPFAM" id="SSF118116">
    <property type="entry name" value="DNA mismatch repair protein MutL"/>
    <property type="match status" value="1"/>
</dbReference>
<dbReference type="SUPFAM" id="SSF54211">
    <property type="entry name" value="Ribosomal protein S5 domain 2-like"/>
    <property type="match status" value="1"/>
</dbReference>
<dbReference type="PROSITE" id="PS00058">
    <property type="entry name" value="DNA_MISMATCH_REPAIR_1"/>
    <property type="match status" value="1"/>
</dbReference>
<keyword id="KW-0227">DNA damage</keyword>
<keyword id="KW-0234">DNA repair</keyword>
<evidence type="ECO:0000255" key="1">
    <source>
        <dbReference type="HAMAP-Rule" id="MF_00149"/>
    </source>
</evidence>
<evidence type="ECO:0000256" key="2">
    <source>
        <dbReference type="SAM" id="MobiDB-lite"/>
    </source>
</evidence>
<feature type="chain" id="PRO_1000096701" description="DNA mismatch repair protein MutL">
    <location>
        <begin position="1"/>
        <end position="625"/>
    </location>
</feature>
<feature type="region of interest" description="Disordered" evidence="2">
    <location>
        <begin position="404"/>
        <end position="427"/>
    </location>
</feature>
<gene>
    <name evidence="1" type="primary">mutL</name>
    <name type="ordered locus">PXO_00410</name>
</gene>
<reference key="1">
    <citation type="journal article" date="2008" name="BMC Genomics">
        <title>Genome sequence and rapid evolution of the rice pathogen Xanthomonas oryzae pv. oryzae PXO99A.</title>
        <authorList>
            <person name="Salzberg S.L."/>
            <person name="Sommer D.D."/>
            <person name="Schatz M.C."/>
            <person name="Phillippy A.M."/>
            <person name="Rabinowicz P.D."/>
            <person name="Tsuge S."/>
            <person name="Furutani A."/>
            <person name="Ochiai H."/>
            <person name="Delcher A.L."/>
            <person name="Kelley D."/>
            <person name="Madupu R."/>
            <person name="Puiu D."/>
            <person name="Radune D."/>
            <person name="Shumway M."/>
            <person name="Trapnell C."/>
            <person name="Aparna G."/>
            <person name="Jha G."/>
            <person name="Pandey A."/>
            <person name="Patil P.B."/>
            <person name="Ishihara H."/>
            <person name="Meyer D.F."/>
            <person name="Szurek B."/>
            <person name="Verdier V."/>
            <person name="Koebnik R."/>
            <person name="Dow J.M."/>
            <person name="Ryan R.P."/>
            <person name="Hirata H."/>
            <person name="Tsuyumu S."/>
            <person name="Won Lee S."/>
            <person name="Seo Y.-S."/>
            <person name="Sriariyanum M."/>
            <person name="Ronald P.C."/>
            <person name="Sonti R.V."/>
            <person name="Van Sluys M.-A."/>
            <person name="Leach J.E."/>
            <person name="White F.F."/>
            <person name="Bogdanove A.J."/>
        </authorList>
    </citation>
    <scope>NUCLEOTIDE SEQUENCE [LARGE SCALE GENOMIC DNA]</scope>
    <source>
        <strain>PXO99A</strain>
    </source>
</reference>
<accession>B2SHP8</accession>
<organism>
    <name type="scientific">Xanthomonas oryzae pv. oryzae (strain PXO99A)</name>
    <dbReference type="NCBI Taxonomy" id="360094"/>
    <lineage>
        <taxon>Bacteria</taxon>
        <taxon>Pseudomonadati</taxon>
        <taxon>Pseudomonadota</taxon>
        <taxon>Gammaproteobacteria</taxon>
        <taxon>Lysobacterales</taxon>
        <taxon>Lysobacteraceae</taxon>
        <taxon>Xanthomonas</taxon>
    </lineage>
</organism>